<sequence>MKINILTLFPEMFDIFKHSIIGRARENGFLHIETVNIRDYTLNKHKKVDDYPYGGGAGMVMTPQPVVDAIKAVKEKNKGKVIFLGPRGKTFNQEMAKELSKEEELIFVCGHYEGIDQRVYKYFDLEISLGDFVLTGGEMACIPVIDSISRLVPGVLGSEESFQDESYYDGTLEYPQYTRPFEFEGEKVPEVLMSGHHENIRKWRRKQSLLITKERRPDMFEKIKLSKEDIKLLKSK</sequence>
<reference key="1">
    <citation type="journal article" date="2006" name="Genome Res.">
        <title>Skewed genomic variability in strains of the toxigenic bacterial pathogen, Clostridium perfringens.</title>
        <authorList>
            <person name="Myers G.S.A."/>
            <person name="Rasko D.A."/>
            <person name="Cheung J.K."/>
            <person name="Ravel J."/>
            <person name="Seshadri R."/>
            <person name="DeBoy R.T."/>
            <person name="Ren Q."/>
            <person name="Varga J."/>
            <person name="Awad M.M."/>
            <person name="Brinkac L.M."/>
            <person name="Daugherty S.C."/>
            <person name="Haft D.H."/>
            <person name="Dodson R.J."/>
            <person name="Madupu R."/>
            <person name="Nelson W.C."/>
            <person name="Rosovitz M.J."/>
            <person name="Sullivan S.A."/>
            <person name="Khouri H."/>
            <person name="Dimitrov G.I."/>
            <person name="Watkins K.L."/>
            <person name="Mulligan S."/>
            <person name="Benton J."/>
            <person name="Radune D."/>
            <person name="Fisher D.J."/>
            <person name="Atkins H.S."/>
            <person name="Hiscox T."/>
            <person name="Jost B.H."/>
            <person name="Billington S.J."/>
            <person name="Songer J.G."/>
            <person name="McClane B.A."/>
            <person name="Titball R.W."/>
            <person name="Rood J.I."/>
            <person name="Melville S.B."/>
            <person name="Paulsen I.T."/>
        </authorList>
    </citation>
    <scope>NUCLEOTIDE SEQUENCE [LARGE SCALE GENOMIC DNA]</scope>
    <source>
        <strain>ATCC 13124 / DSM 756 / JCM 1290 / NCIMB 6125 / NCTC 8237 / S 107 / Type A</strain>
    </source>
</reference>
<protein>
    <recommendedName>
        <fullName evidence="1">tRNA (guanine-N(1)-)-methyltransferase</fullName>
        <ecNumber evidence="1">2.1.1.228</ecNumber>
    </recommendedName>
    <alternativeName>
        <fullName evidence="1">M1G-methyltransferase</fullName>
    </alternativeName>
    <alternativeName>
        <fullName evidence="1">tRNA [GM37] methyltransferase</fullName>
    </alternativeName>
</protein>
<name>TRMD_CLOP1</name>
<feature type="chain" id="PRO_0000257406" description="tRNA (guanine-N(1)-)-methyltransferase">
    <location>
        <begin position="1"/>
        <end position="236"/>
    </location>
</feature>
<feature type="binding site" evidence="1">
    <location>
        <position position="110"/>
    </location>
    <ligand>
        <name>S-adenosyl-L-methionine</name>
        <dbReference type="ChEBI" id="CHEBI:59789"/>
    </ligand>
</feature>
<feature type="binding site" evidence="1">
    <location>
        <begin position="129"/>
        <end position="134"/>
    </location>
    <ligand>
        <name>S-adenosyl-L-methionine</name>
        <dbReference type="ChEBI" id="CHEBI:59789"/>
    </ligand>
</feature>
<dbReference type="EC" id="2.1.1.228" evidence="1"/>
<dbReference type="EMBL" id="CP000246">
    <property type="protein sequence ID" value="ABG83315.1"/>
    <property type="molecule type" value="Genomic_DNA"/>
</dbReference>
<dbReference type="RefSeq" id="WP_003458426.1">
    <property type="nucleotide sequence ID" value="NC_008261.1"/>
</dbReference>
<dbReference type="SMR" id="Q0TPP4"/>
<dbReference type="STRING" id="195103.CPF_1963"/>
<dbReference type="PaxDb" id="195103-CPF_1963"/>
<dbReference type="GeneID" id="93001753"/>
<dbReference type="KEGG" id="cpf:CPF_1963"/>
<dbReference type="eggNOG" id="COG0336">
    <property type="taxonomic scope" value="Bacteria"/>
</dbReference>
<dbReference type="HOGENOM" id="CLU_047363_0_1_9"/>
<dbReference type="Proteomes" id="UP000001823">
    <property type="component" value="Chromosome"/>
</dbReference>
<dbReference type="GO" id="GO:0005829">
    <property type="term" value="C:cytosol"/>
    <property type="evidence" value="ECO:0007669"/>
    <property type="project" value="TreeGrafter"/>
</dbReference>
<dbReference type="GO" id="GO:0052906">
    <property type="term" value="F:tRNA (guanine(37)-N1)-methyltransferase activity"/>
    <property type="evidence" value="ECO:0007669"/>
    <property type="project" value="UniProtKB-UniRule"/>
</dbReference>
<dbReference type="GO" id="GO:0002939">
    <property type="term" value="P:tRNA N1-guanine methylation"/>
    <property type="evidence" value="ECO:0007669"/>
    <property type="project" value="TreeGrafter"/>
</dbReference>
<dbReference type="CDD" id="cd18080">
    <property type="entry name" value="TrmD-like"/>
    <property type="match status" value="1"/>
</dbReference>
<dbReference type="FunFam" id="1.10.1270.20:FF:000001">
    <property type="entry name" value="tRNA (guanine-N(1)-)-methyltransferase"/>
    <property type="match status" value="1"/>
</dbReference>
<dbReference type="FunFam" id="3.40.1280.10:FF:000001">
    <property type="entry name" value="tRNA (guanine-N(1)-)-methyltransferase"/>
    <property type="match status" value="1"/>
</dbReference>
<dbReference type="Gene3D" id="3.40.1280.10">
    <property type="match status" value="1"/>
</dbReference>
<dbReference type="Gene3D" id="1.10.1270.20">
    <property type="entry name" value="tRNA(m1g37)methyltransferase, domain 2"/>
    <property type="match status" value="1"/>
</dbReference>
<dbReference type="HAMAP" id="MF_00605">
    <property type="entry name" value="TrmD"/>
    <property type="match status" value="1"/>
</dbReference>
<dbReference type="InterPro" id="IPR029028">
    <property type="entry name" value="Alpha/beta_knot_MTases"/>
</dbReference>
<dbReference type="InterPro" id="IPR023148">
    <property type="entry name" value="tRNA_m1G_MeTrfase_C_sf"/>
</dbReference>
<dbReference type="InterPro" id="IPR002649">
    <property type="entry name" value="tRNA_m1G_MeTrfase_TrmD"/>
</dbReference>
<dbReference type="InterPro" id="IPR029026">
    <property type="entry name" value="tRNA_m1G_MTases_N"/>
</dbReference>
<dbReference type="InterPro" id="IPR016009">
    <property type="entry name" value="tRNA_MeTrfase_TRMD/TRM10"/>
</dbReference>
<dbReference type="NCBIfam" id="NF000648">
    <property type="entry name" value="PRK00026.1"/>
    <property type="match status" value="1"/>
</dbReference>
<dbReference type="NCBIfam" id="TIGR00088">
    <property type="entry name" value="trmD"/>
    <property type="match status" value="1"/>
</dbReference>
<dbReference type="PANTHER" id="PTHR46417">
    <property type="entry name" value="TRNA (GUANINE-N(1)-)-METHYLTRANSFERASE"/>
    <property type="match status" value="1"/>
</dbReference>
<dbReference type="PANTHER" id="PTHR46417:SF1">
    <property type="entry name" value="TRNA (GUANINE-N(1)-)-METHYLTRANSFERASE"/>
    <property type="match status" value="1"/>
</dbReference>
<dbReference type="Pfam" id="PF01746">
    <property type="entry name" value="tRNA_m1G_MT"/>
    <property type="match status" value="1"/>
</dbReference>
<dbReference type="PIRSF" id="PIRSF000386">
    <property type="entry name" value="tRNA_mtase"/>
    <property type="match status" value="1"/>
</dbReference>
<dbReference type="SUPFAM" id="SSF75217">
    <property type="entry name" value="alpha/beta knot"/>
    <property type="match status" value="1"/>
</dbReference>
<keyword id="KW-0963">Cytoplasm</keyword>
<keyword id="KW-0489">Methyltransferase</keyword>
<keyword id="KW-0949">S-adenosyl-L-methionine</keyword>
<keyword id="KW-0808">Transferase</keyword>
<keyword id="KW-0819">tRNA processing</keyword>
<proteinExistence type="inferred from homology"/>
<organism>
    <name type="scientific">Clostridium perfringens (strain ATCC 13124 / DSM 756 / JCM 1290 / NCIMB 6125 / NCTC 8237 / Type A)</name>
    <dbReference type="NCBI Taxonomy" id="195103"/>
    <lineage>
        <taxon>Bacteria</taxon>
        <taxon>Bacillati</taxon>
        <taxon>Bacillota</taxon>
        <taxon>Clostridia</taxon>
        <taxon>Eubacteriales</taxon>
        <taxon>Clostridiaceae</taxon>
        <taxon>Clostridium</taxon>
    </lineage>
</organism>
<gene>
    <name evidence="1" type="primary">trmD</name>
    <name type="ordered locus">CPF_1963</name>
</gene>
<evidence type="ECO:0000255" key="1">
    <source>
        <dbReference type="HAMAP-Rule" id="MF_00605"/>
    </source>
</evidence>
<accession>Q0TPP4</accession>
<comment type="function">
    <text evidence="1">Specifically methylates guanosine-37 in various tRNAs.</text>
</comment>
<comment type="catalytic activity">
    <reaction evidence="1">
        <text>guanosine(37) in tRNA + S-adenosyl-L-methionine = N(1)-methylguanosine(37) in tRNA + S-adenosyl-L-homocysteine + H(+)</text>
        <dbReference type="Rhea" id="RHEA:36899"/>
        <dbReference type="Rhea" id="RHEA-COMP:10145"/>
        <dbReference type="Rhea" id="RHEA-COMP:10147"/>
        <dbReference type="ChEBI" id="CHEBI:15378"/>
        <dbReference type="ChEBI" id="CHEBI:57856"/>
        <dbReference type="ChEBI" id="CHEBI:59789"/>
        <dbReference type="ChEBI" id="CHEBI:73542"/>
        <dbReference type="ChEBI" id="CHEBI:74269"/>
        <dbReference type="EC" id="2.1.1.228"/>
    </reaction>
</comment>
<comment type="subunit">
    <text evidence="1">Homodimer.</text>
</comment>
<comment type="subcellular location">
    <subcellularLocation>
        <location evidence="1">Cytoplasm</location>
    </subcellularLocation>
</comment>
<comment type="similarity">
    <text evidence="1">Belongs to the RNA methyltransferase TrmD family.</text>
</comment>